<evidence type="ECO:0000255" key="1">
    <source>
        <dbReference type="HAMAP-Rule" id="MF_00074"/>
    </source>
</evidence>
<proteinExistence type="inferred from homology"/>
<keyword id="KW-0963">Cytoplasm</keyword>
<keyword id="KW-0489">Methyltransferase</keyword>
<keyword id="KW-0698">rRNA processing</keyword>
<keyword id="KW-0949">S-adenosyl-L-methionine</keyword>
<keyword id="KW-0808">Transferase</keyword>
<protein>
    <recommendedName>
        <fullName evidence="1">Ribosomal RNA small subunit methyltransferase G</fullName>
        <ecNumber evidence="1">2.1.1.170</ecNumber>
    </recommendedName>
    <alternativeName>
        <fullName evidence="1">16S rRNA 7-methylguanosine methyltransferase</fullName>
        <shortName evidence="1">16S rRNA m7G methyltransferase</shortName>
    </alternativeName>
</protein>
<organism>
    <name type="scientific">Pseudomonas aeruginosa (strain LESB58)</name>
    <dbReference type="NCBI Taxonomy" id="557722"/>
    <lineage>
        <taxon>Bacteria</taxon>
        <taxon>Pseudomonadati</taxon>
        <taxon>Pseudomonadota</taxon>
        <taxon>Gammaproteobacteria</taxon>
        <taxon>Pseudomonadales</taxon>
        <taxon>Pseudomonadaceae</taxon>
        <taxon>Pseudomonas</taxon>
    </lineage>
</organism>
<sequence length="214" mass="23735">MSAVTQHHADELARGADELGVALDADKQRQLLAYLALLIKWNKAYNLTAVRDPDEMVSRHLLDSLSIVPYAEAGDNWLDVGSGGGMPGVPLAILFPEKRLTLLDSNGKKTRFLTQVKLELKLANLEVVHSRVEAFRPESPFDGIVSRAFSSLEDFANWTRHLGGQETRWLAMKGVHPNEELAALPEDFRVEAEHALAVPGCQGQRHLLILRRTA</sequence>
<dbReference type="EC" id="2.1.1.170" evidence="1"/>
<dbReference type="EMBL" id="FM209186">
    <property type="protein sequence ID" value="CAW30714.1"/>
    <property type="molecule type" value="Genomic_DNA"/>
</dbReference>
<dbReference type="RefSeq" id="WP_003100242.1">
    <property type="nucleotide sequence ID" value="NC_011770.1"/>
</dbReference>
<dbReference type="SMR" id="B7V7A1"/>
<dbReference type="KEGG" id="pag:PLES_59601"/>
<dbReference type="HOGENOM" id="CLU_065341_2_0_6"/>
<dbReference type="GO" id="GO:0005829">
    <property type="term" value="C:cytosol"/>
    <property type="evidence" value="ECO:0007669"/>
    <property type="project" value="TreeGrafter"/>
</dbReference>
<dbReference type="GO" id="GO:0070043">
    <property type="term" value="F:rRNA (guanine-N7-)-methyltransferase activity"/>
    <property type="evidence" value="ECO:0007669"/>
    <property type="project" value="UniProtKB-UniRule"/>
</dbReference>
<dbReference type="FunFam" id="3.40.50.150:FF:000032">
    <property type="entry name" value="Ribosomal RNA small subunit methyltransferase G"/>
    <property type="match status" value="1"/>
</dbReference>
<dbReference type="Gene3D" id="3.40.50.150">
    <property type="entry name" value="Vaccinia Virus protein VP39"/>
    <property type="match status" value="1"/>
</dbReference>
<dbReference type="HAMAP" id="MF_00074">
    <property type="entry name" value="16SrRNA_methyltr_G"/>
    <property type="match status" value="1"/>
</dbReference>
<dbReference type="InterPro" id="IPR003682">
    <property type="entry name" value="rRNA_ssu_MeTfrase_G"/>
</dbReference>
<dbReference type="InterPro" id="IPR029063">
    <property type="entry name" value="SAM-dependent_MTases_sf"/>
</dbReference>
<dbReference type="NCBIfam" id="TIGR00138">
    <property type="entry name" value="rsmG_gidB"/>
    <property type="match status" value="1"/>
</dbReference>
<dbReference type="PANTHER" id="PTHR31760">
    <property type="entry name" value="S-ADENOSYL-L-METHIONINE-DEPENDENT METHYLTRANSFERASES SUPERFAMILY PROTEIN"/>
    <property type="match status" value="1"/>
</dbReference>
<dbReference type="PANTHER" id="PTHR31760:SF0">
    <property type="entry name" value="S-ADENOSYL-L-METHIONINE-DEPENDENT METHYLTRANSFERASES SUPERFAMILY PROTEIN"/>
    <property type="match status" value="1"/>
</dbReference>
<dbReference type="Pfam" id="PF02527">
    <property type="entry name" value="GidB"/>
    <property type="match status" value="1"/>
</dbReference>
<dbReference type="PIRSF" id="PIRSF003078">
    <property type="entry name" value="GidB"/>
    <property type="match status" value="1"/>
</dbReference>
<dbReference type="SUPFAM" id="SSF53335">
    <property type="entry name" value="S-adenosyl-L-methionine-dependent methyltransferases"/>
    <property type="match status" value="1"/>
</dbReference>
<feature type="chain" id="PRO_1000117074" description="Ribosomal RNA small subunit methyltransferase G">
    <location>
        <begin position="1"/>
        <end position="214"/>
    </location>
</feature>
<feature type="binding site" evidence="1">
    <location>
        <position position="81"/>
    </location>
    <ligand>
        <name>S-adenosyl-L-methionine</name>
        <dbReference type="ChEBI" id="CHEBI:59789"/>
    </ligand>
</feature>
<feature type="binding site" evidence="1">
    <location>
        <position position="86"/>
    </location>
    <ligand>
        <name>S-adenosyl-L-methionine</name>
        <dbReference type="ChEBI" id="CHEBI:59789"/>
    </ligand>
</feature>
<feature type="binding site" evidence="1">
    <location>
        <begin position="132"/>
        <end position="133"/>
    </location>
    <ligand>
        <name>S-adenosyl-L-methionine</name>
        <dbReference type="ChEBI" id="CHEBI:59789"/>
    </ligand>
</feature>
<feature type="binding site" evidence="1">
    <location>
        <position position="147"/>
    </location>
    <ligand>
        <name>S-adenosyl-L-methionine</name>
        <dbReference type="ChEBI" id="CHEBI:59789"/>
    </ligand>
</feature>
<name>RSMG_PSEA8</name>
<accession>B7V7A1</accession>
<reference key="1">
    <citation type="journal article" date="2009" name="Genome Res.">
        <title>Newly introduced genomic prophage islands are critical determinants of in vivo competitiveness in the Liverpool epidemic strain of Pseudomonas aeruginosa.</title>
        <authorList>
            <person name="Winstanley C."/>
            <person name="Langille M.G.I."/>
            <person name="Fothergill J.L."/>
            <person name="Kukavica-Ibrulj I."/>
            <person name="Paradis-Bleau C."/>
            <person name="Sanschagrin F."/>
            <person name="Thomson N.R."/>
            <person name="Winsor G.L."/>
            <person name="Quail M.A."/>
            <person name="Lennard N."/>
            <person name="Bignell A."/>
            <person name="Clarke L."/>
            <person name="Seeger K."/>
            <person name="Saunders D."/>
            <person name="Harris D."/>
            <person name="Parkhill J."/>
            <person name="Hancock R.E.W."/>
            <person name="Brinkman F.S.L."/>
            <person name="Levesque R.C."/>
        </authorList>
    </citation>
    <scope>NUCLEOTIDE SEQUENCE [LARGE SCALE GENOMIC DNA]</scope>
    <source>
        <strain>LESB58</strain>
    </source>
</reference>
<gene>
    <name evidence="1" type="primary">rsmG</name>
    <name type="ordered locus">PLES_59601</name>
</gene>
<comment type="function">
    <text evidence="1">Specifically methylates the N7 position of guanine in position 527 of 16S rRNA.</text>
</comment>
<comment type="catalytic activity">
    <reaction evidence="1">
        <text>guanosine(527) in 16S rRNA + S-adenosyl-L-methionine = N(7)-methylguanosine(527) in 16S rRNA + S-adenosyl-L-homocysteine</text>
        <dbReference type="Rhea" id="RHEA:42732"/>
        <dbReference type="Rhea" id="RHEA-COMP:10209"/>
        <dbReference type="Rhea" id="RHEA-COMP:10210"/>
        <dbReference type="ChEBI" id="CHEBI:57856"/>
        <dbReference type="ChEBI" id="CHEBI:59789"/>
        <dbReference type="ChEBI" id="CHEBI:74269"/>
        <dbReference type="ChEBI" id="CHEBI:74480"/>
        <dbReference type="EC" id="2.1.1.170"/>
    </reaction>
</comment>
<comment type="subcellular location">
    <subcellularLocation>
        <location evidence="1">Cytoplasm</location>
    </subcellularLocation>
</comment>
<comment type="similarity">
    <text evidence="1">Belongs to the methyltransferase superfamily. RNA methyltransferase RsmG family.</text>
</comment>